<dbReference type="EMBL" id="PVID01019406">
    <property type="status" value="NOT_ANNOTATED_CDS"/>
    <property type="molecule type" value="Genomic_DNA"/>
</dbReference>
<dbReference type="SMR" id="P0DUP8"/>
<dbReference type="GO" id="GO:0042627">
    <property type="term" value="C:chylomicron"/>
    <property type="evidence" value="ECO:0007669"/>
    <property type="project" value="UniProtKB-KW"/>
</dbReference>
<dbReference type="GO" id="GO:0070062">
    <property type="term" value="C:extracellular exosome"/>
    <property type="evidence" value="ECO:0000250"/>
    <property type="project" value="UniProtKB"/>
</dbReference>
<dbReference type="GO" id="GO:0034364">
    <property type="term" value="C:high-density lipoprotein particle"/>
    <property type="evidence" value="ECO:0007669"/>
    <property type="project" value="UniProtKB-KW"/>
</dbReference>
<dbReference type="GO" id="GO:0034362">
    <property type="term" value="C:low-density lipoprotein particle"/>
    <property type="evidence" value="ECO:0007669"/>
    <property type="project" value="TreeGrafter"/>
</dbReference>
<dbReference type="GO" id="GO:0097487">
    <property type="term" value="C:multivesicular body, internal vesicle"/>
    <property type="evidence" value="ECO:0000250"/>
    <property type="project" value="UniProtKB"/>
</dbReference>
<dbReference type="GO" id="GO:0034361">
    <property type="term" value="C:very-low-density lipoprotein particle"/>
    <property type="evidence" value="ECO:0007669"/>
    <property type="project" value="UniProtKB-KW"/>
</dbReference>
<dbReference type="GO" id="GO:0120020">
    <property type="term" value="F:cholesterol transfer activity"/>
    <property type="evidence" value="ECO:0007669"/>
    <property type="project" value="TreeGrafter"/>
</dbReference>
<dbReference type="GO" id="GO:0008201">
    <property type="term" value="F:heparin binding"/>
    <property type="evidence" value="ECO:0007669"/>
    <property type="project" value="UniProtKB-KW"/>
</dbReference>
<dbReference type="GO" id="GO:0060228">
    <property type="term" value="F:phosphatidylcholine-sterol O-acyltransferase activator activity"/>
    <property type="evidence" value="ECO:0007669"/>
    <property type="project" value="TreeGrafter"/>
</dbReference>
<dbReference type="GO" id="GO:0005543">
    <property type="term" value="F:phospholipid binding"/>
    <property type="evidence" value="ECO:0007669"/>
    <property type="project" value="TreeGrafter"/>
</dbReference>
<dbReference type="GO" id="GO:0055090">
    <property type="term" value="P:acylglycerol homeostasis"/>
    <property type="evidence" value="ECO:0007669"/>
    <property type="project" value="TreeGrafter"/>
</dbReference>
<dbReference type="GO" id="GO:0033344">
    <property type="term" value="P:cholesterol efflux"/>
    <property type="evidence" value="ECO:0007669"/>
    <property type="project" value="TreeGrafter"/>
</dbReference>
<dbReference type="GO" id="GO:0008203">
    <property type="term" value="P:cholesterol metabolic process"/>
    <property type="evidence" value="ECO:0007669"/>
    <property type="project" value="TreeGrafter"/>
</dbReference>
<dbReference type="GO" id="GO:0042157">
    <property type="term" value="P:lipoprotein metabolic process"/>
    <property type="evidence" value="ECO:0007669"/>
    <property type="project" value="InterPro"/>
</dbReference>
<dbReference type="GO" id="GO:0032438">
    <property type="term" value="P:melanosome organization"/>
    <property type="evidence" value="ECO:0000250"/>
    <property type="project" value="UniProtKB"/>
</dbReference>
<dbReference type="GO" id="GO:0033700">
    <property type="term" value="P:phospholipid efflux"/>
    <property type="evidence" value="ECO:0007669"/>
    <property type="project" value="TreeGrafter"/>
</dbReference>
<dbReference type="FunFam" id="1.20.120.20:FF:000002">
    <property type="entry name" value="Apolipoprotein E"/>
    <property type="match status" value="1"/>
</dbReference>
<dbReference type="FunFam" id="1.20.120.20:FF:000003">
    <property type="entry name" value="Apolipoprotein E"/>
    <property type="match status" value="1"/>
</dbReference>
<dbReference type="Gene3D" id="1.20.120.20">
    <property type="entry name" value="Apolipoprotein"/>
    <property type="match status" value="2"/>
</dbReference>
<dbReference type="InterPro" id="IPR000074">
    <property type="entry name" value="ApoA_E"/>
</dbReference>
<dbReference type="InterPro" id="IPR050163">
    <property type="entry name" value="Apolipoprotein_A1/A4/E"/>
</dbReference>
<dbReference type="PANTHER" id="PTHR18976">
    <property type="entry name" value="APOLIPOPROTEIN"/>
    <property type="match status" value="1"/>
</dbReference>
<dbReference type="PANTHER" id="PTHR18976:SF2">
    <property type="entry name" value="APOLIPOPROTEIN E"/>
    <property type="match status" value="1"/>
</dbReference>
<dbReference type="Pfam" id="PF01442">
    <property type="entry name" value="Apolipoprotein"/>
    <property type="match status" value="1"/>
</dbReference>
<dbReference type="SUPFAM" id="SSF58113">
    <property type="entry name" value="Apolipoprotein A-I"/>
    <property type="match status" value="1"/>
</dbReference>
<name>APOE_TAPTE</name>
<proteinExistence type="inferred from homology"/>
<protein>
    <recommendedName>
        <fullName>Apolipoprotein E</fullName>
        <shortName>Apo-E</shortName>
    </recommendedName>
</protein>
<gene>
    <name type="primary">APOE</name>
</gene>
<reference key="1">
    <citation type="submission" date="2018-02" db="EMBL/GenBank/DDBJ databases">
        <title>The 200 mammals project: sequencing genomes by a novel cost-effective method, yielding a high resolution annotation of the human genome.</title>
        <authorList>
            <person name="Johnson J."/>
            <person name="Muren E."/>
            <person name="Swofford R."/>
            <person name="Turner-Maier J."/>
            <person name="Marinescu V.D."/>
            <person name="Genereux D.P."/>
            <person name="Alfoldi J."/>
            <person name="Birren B."/>
            <person name="Karlsson E.K."/>
            <person name="Lindblad-Toh K."/>
        </authorList>
    </citation>
    <scope>NUCLEOTIDE SEQUENCE [LARGE SCALE GENOMIC DNA]</scope>
</reference>
<reference key="2">
    <citation type="unpublished observations" date="2021-03">
        <authorList>
            <person name="Puppione D.L."/>
        </authorList>
    </citation>
    <scope>IDENTIFICATION</scope>
</reference>
<feature type="signal peptide" evidence="3">
    <location>
        <begin position="1"/>
        <end position="18"/>
    </location>
</feature>
<feature type="chain" id="PRO_0000452911" description="Apolipoprotein E">
    <location>
        <begin position="19"/>
        <end position="310"/>
    </location>
</feature>
<feature type="repeat" description="1">
    <location>
        <begin position="77"/>
        <end position="98"/>
    </location>
</feature>
<feature type="repeat" description="2">
    <location>
        <begin position="99"/>
        <end position="120"/>
    </location>
</feature>
<feature type="repeat" description="3">
    <location>
        <begin position="121"/>
        <end position="142"/>
    </location>
</feature>
<feature type="repeat" description="4">
    <location>
        <begin position="143"/>
        <end position="164"/>
    </location>
</feature>
<feature type="repeat">
    <location>
        <begin position="165"/>
        <end position="186"/>
    </location>
</feature>
<feature type="repeat" description="6">
    <location>
        <begin position="187"/>
        <end position="204"/>
    </location>
</feature>
<feature type="repeat" description="7">
    <location>
        <begin position="205"/>
        <end position="226"/>
    </location>
</feature>
<feature type="repeat" description="8">
    <location>
        <begin position="227"/>
        <end position="248"/>
    </location>
</feature>
<feature type="region of interest" description="8 X 22 AA approximate tandem repeats">
    <location>
        <begin position="77"/>
        <end position="248"/>
    </location>
</feature>
<feature type="region of interest" description="LDL and other lipoprotein receptors binding" evidence="1">
    <location>
        <begin position="155"/>
        <end position="165"/>
    </location>
</feature>
<feature type="region of interest" description="Lipid-binding and lipoprotein association" evidence="1">
    <location>
        <begin position="203"/>
        <end position="283"/>
    </location>
</feature>
<feature type="region of interest" description="Homooligomerization" evidence="1">
    <location>
        <begin position="259"/>
        <end position="310"/>
    </location>
</feature>
<feature type="region of interest" description="Specificity for association with VLDL" evidence="1">
    <location>
        <begin position="271"/>
        <end position="283"/>
    </location>
</feature>
<feature type="binding site" evidence="1">
    <location>
        <begin position="159"/>
        <end position="162"/>
    </location>
    <ligand>
        <name>heparin</name>
        <dbReference type="ChEBI" id="CHEBI:28304"/>
    </ligand>
</feature>
<feature type="binding site" evidence="1">
    <location>
        <begin position="222"/>
        <end position="229"/>
    </location>
    <ligand>
        <name>heparin</name>
        <dbReference type="ChEBI" id="CHEBI:28304"/>
    </ligand>
</feature>
<feature type="modified residue" description="Methionine sulfoxide" evidence="2">
    <location>
        <position position="140"/>
    </location>
</feature>
<feature type="modified residue" description="Phosphoserine" evidence="1">
    <location>
        <position position="144"/>
    </location>
</feature>
<keyword id="KW-0162">Chylomicron</keyword>
<keyword id="KW-0967">Endosome</keyword>
<keyword id="KW-0272">Extracellular matrix</keyword>
<keyword id="KW-0325">Glycoprotein</keyword>
<keyword id="KW-0345">HDL</keyword>
<keyword id="KW-0358">Heparin-binding</keyword>
<keyword id="KW-0445">Lipid transport</keyword>
<keyword id="KW-0446">Lipid-binding</keyword>
<keyword id="KW-0558">Oxidation</keyword>
<keyword id="KW-0597">Phosphoprotein</keyword>
<keyword id="KW-0677">Repeat</keyword>
<keyword id="KW-0964">Secreted</keyword>
<keyword id="KW-0732">Signal</keyword>
<keyword id="KW-0813">Transport</keyword>
<keyword id="KW-0850">VLDL</keyword>
<comment type="function">
    <text evidence="1">APOE is an apolipoprotein, a protein associating with lipid particles, that mainly functions in lipoprotein-mediated lipid transport between organs via the plasma and interstitial fluids. APOE is a core component of plasma lipoproteins and is involved in their production, conversion and clearance. Apolipoproteins are amphipathic molecules that interact both with lipids of the lipoprotein particle core and the aqueous environment of the plasma. As such, APOE associates with chylomicrons, chylomicron remnants, very low density lipoproteins (VLDL) and intermediate density lipoproteins (IDL) but shows a preferential binding to high-density lipoproteins (HDL). It also binds a wide range of cellular receptors including the LDL receptor/LDLR, the LDL receptor-related proteins LRP1, LRP2 and LRP8 and the very low-density lipoprotein receptor/VLDLR that mediate the cellular uptake of the APOE-containing lipoprotein particles. Finally, APOE also has a heparin-binding activity and binds heparan-sulfate proteoglycans on the surface of cells, a property that supports the capture and the receptor-mediated uptake of APOE-containing lipoproteins by cells. A main function of APOE is to mediate lipoprotein clearance through the uptake of chylomicrons, VLDLs, and HDLs by hepatocytes. APOE is also involved in the biosynthesis by the liver of VLDLs as well as their uptake by peripheral tissues ensuring the delivery of triglycerides and energy storage in muscle, heart and adipose tissues. By participating in the lipoprotein-mediated distribution of lipids among tissues, APOE plays a critical role in plasma and tissues lipid homeostasis. APOE is also involved in two steps of reverse cholesterol transport, the HDLs-mediated transport of cholesterol from peripheral tissues to the liver, and thereby plays an important role in cholesterol homeostasis. First, it is functionally associated with ABCA1 in the biogenesis of HDLs in tissues. Second, it is enriched in circulating HDLs and mediates their uptake by hepatocytes. APOE also plays an important role in lipid transport in the central nervous system, regulating neuron survival and sprouting.</text>
</comment>
<comment type="subunit">
    <text evidence="1">Homotetramer. May interact with ABCA1; functionally associated with ABCA1 in the biogenesis of HDLs. May interact with APP/A4 amyloid-beta peptide; the interaction is extremely stable in vitro but its physiological significance is unclear. May interact with MAPT. May interact with MAP2. In the cerebrospinal fluid, interacts with secreted SORL1. Interacts with PMEL; this allows the loading of PMEL luminal fragment on ILVs to induce fibril nucleation.</text>
</comment>
<comment type="subcellular location">
    <subcellularLocation>
        <location evidence="1">Secreted</location>
    </subcellularLocation>
    <subcellularLocation>
        <location evidence="1">Secreted</location>
        <location evidence="1">Extracellular space</location>
    </subcellularLocation>
    <subcellularLocation>
        <location evidence="1">Secreted</location>
        <location evidence="1">Extracellular space</location>
        <location evidence="1">Extracellular matrix</location>
    </subcellularLocation>
    <subcellularLocation>
        <location evidence="1">Extracellular vesicle</location>
    </subcellularLocation>
    <subcellularLocation>
        <location evidence="1">Endosome</location>
        <location evidence="1">Multivesicular body</location>
    </subcellularLocation>
    <text evidence="1">In the plasma, APOE is associated with chylomicrons, chylomicrons remnants, VLDL, LDL and HDL lipoproteins. Lipid poor oligomeric APOE is associated with the extracellular matrix in a calcium- and heparan-sulfate proteoglycans-dependent manner. Lipidation induces the release from the extracellular matrix. Colocalizes with CD63 and PMEL at exosomes and in intraluminal vesicles within multivesicular endosomes.</text>
</comment>
<comment type="PTM">
    <text evidence="1">APOE exists as multiple glycosylated and sialylated glycoforms within cells and in plasma. The extent of glycosylation and sialylation are tissue and context specific.</text>
</comment>
<comment type="PTM">
    <text evidence="1">Glycated in plasma VLDL.</text>
</comment>
<comment type="PTM">
    <text evidence="1">Phosphorylated by FAM20C in the extracellular medium.</text>
</comment>
<comment type="similarity">
    <text evidence="4">Belongs to the apolipoprotein A1/A4/E family.</text>
</comment>
<accession>P0DUP8</accession>
<sequence length="310" mass="35638">MKVLWAALVVTLLAGCQADVEPEPEVQLGNEWAKWQAGQPWEQALGRFWNYLRWVQTLSDQVQEELLSTQATQELTALMEETMKEVKTYKAQLEQQLGPTAQETQARVSKELQAAQARLGADMEDVRNRLVQYRSELQAMMGQSTEELRGRLNSHLRKLRKRLLRDAEDLQKRLAVYQAGIREGAERSVNTLRERLRPLVEQAATVRSLISKPLQERAEAWGQRLRGRLEKVGTQAGDRLDEVREQVQEVRAKVEEQANQMRLQAEAFHARLKSWFEPLVQDMQQKWAELVEKVQLAVGTSPTSESSEKQ</sequence>
<evidence type="ECO:0000250" key="1">
    <source>
        <dbReference type="UniProtKB" id="P02649"/>
    </source>
</evidence>
<evidence type="ECO:0000250" key="2">
    <source>
        <dbReference type="UniProtKB" id="P08226"/>
    </source>
</evidence>
<evidence type="ECO:0000255" key="3"/>
<evidence type="ECO:0000305" key="4"/>
<organism>
    <name type="scientific">Tapirus terrestris</name>
    <name type="common">Lowland tapir</name>
    <name type="synonym">Brazilian tapir</name>
    <dbReference type="NCBI Taxonomy" id="9801"/>
    <lineage>
        <taxon>Eukaryota</taxon>
        <taxon>Metazoa</taxon>
        <taxon>Chordata</taxon>
        <taxon>Craniata</taxon>
        <taxon>Vertebrata</taxon>
        <taxon>Euteleostomi</taxon>
        <taxon>Mammalia</taxon>
        <taxon>Eutheria</taxon>
        <taxon>Laurasiatheria</taxon>
        <taxon>Perissodactyla</taxon>
        <taxon>Tapiridae</taxon>
        <taxon>Tapirus</taxon>
    </lineage>
</organism>